<dbReference type="EMBL" id="AL513382">
    <property type="protein sequence ID" value="CAD03261.1"/>
    <property type="molecule type" value="Genomic_DNA"/>
</dbReference>
<dbReference type="EMBL" id="AE014613">
    <property type="protein sequence ID" value="AAO71268.1"/>
    <property type="molecule type" value="Genomic_DNA"/>
</dbReference>
<dbReference type="RefSeq" id="NP_458194.1">
    <property type="nucleotide sequence ID" value="NC_003198.1"/>
</dbReference>
<dbReference type="RefSeq" id="WP_000818596.1">
    <property type="nucleotide sequence ID" value="NZ_WSUR01000001.1"/>
</dbReference>
<dbReference type="SMR" id="Q8Z2H4"/>
<dbReference type="STRING" id="220341.gene:17587905"/>
<dbReference type="KEGG" id="stt:t3786"/>
<dbReference type="KEGG" id="sty:STY4062"/>
<dbReference type="PATRIC" id="fig|220341.7.peg.4147"/>
<dbReference type="eggNOG" id="COG1309">
    <property type="taxonomic scope" value="Bacteria"/>
</dbReference>
<dbReference type="HOGENOM" id="CLU_069356_5_0_6"/>
<dbReference type="OMA" id="KMYEGLI"/>
<dbReference type="OrthoDB" id="9179041at2"/>
<dbReference type="Proteomes" id="UP000000541">
    <property type="component" value="Chromosome"/>
</dbReference>
<dbReference type="Proteomes" id="UP000002670">
    <property type="component" value="Chromosome"/>
</dbReference>
<dbReference type="GO" id="GO:0043590">
    <property type="term" value="C:bacterial nucleoid"/>
    <property type="evidence" value="ECO:0007669"/>
    <property type="project" value="UniProtKB-UniRule"/>
</dbReference>
<dbReference type="GO" id="GO:0005737">
    <property type="term" value="C:cytoplasm"/>
    <property type="evidence" value="ECO:0007669"/>
    <property type="project" value="UniProtKB-UniRule"/>
</dbReference>
<dbReference type="GO" id="GO:0003700">
    <property type="term" value="F:DNA-binding transcription factor activity"/>
    <property type="evidence" value="ECO:0007669"/>
    <property type="project" value="TreeGrafter"/>
</dbReference>
<dbReference type="GO" id="GO:0000976">
    <property type="term" value="F:transcription cis-regulatory region binding"/>
    <property type="evidence" value="ECO:0007669"/>
    <property type="project" value="TreeGrafter"/>
</dbReference>
<dbReference type="GO" id="GO:0051301">
    <property type="term" value="P:cell division"/>
    <property type="evidence" value="ECO:0007669"/>
    <property type="project" value="UniProtKB-KW"/>
</dbReference>
<dbReference type="GO" id="GO:0010974">
    <property type="term" value="P:negative regulation of division septum assembly"/>
    <property type="evidence" value="ECO:0007669"/>
    <property type="project" value="InterPro"/>
</dbReference>
<dbReference type="FunFam" id="1.10.357.10:FF:000002">
    <property type="entry name" value="Nucleoid occlusion factor SlmA"/>
    <property type="match status" value="1"/>
</dbReference>
<dbReference type="Gene3D" id="1.10.357.10">
    <property type="entry name" value="Tetracycline Repressor, domain 2"/>
    <property type="match status" value="1"/>
</dbReference>
<dbReference type="HAMAP" id="MF_01839">
    <property type="entry name" value="NO_factor_SlmA"/>
    <property type="match status" value="1"/>
</dbReference>
<dbReference type="InterPro" id="IPR023772">
    <property type="entry name" value="DNA-bd_HTH_TetR-type_CS"/>
</dbReference>
<dbReference type="InterPro" id="IPR009057">
    <property type="entry name" value="Homeodomain-like_sf"/>
</dbReference>
<dbReference type="InterPro" id="IPR050109">
    <property type="entry name" value="HTH-type_TetR-like_transc_reg"/>
</dbReference>
<dbReference type="InterPro" id="IPR001647">
    <property type="entry name" value="HTH_TetR"/>
</dbReference>
<dbReference type="InterPro" id="IPR023769">
    <property type="entry name" value="NO_SlmA"/>
</dbReference>
<dbReference type="InterPro" id="IPR054580">
    <property type="entry name" value="SlmA-like_C"/>
</dbReference>
<dbReference type="InterPro" id="IPR036271">
    <property type="entry name" value="Tet_transcr_reg_TetR-rel_C_sf"/>
</dbReference>
<dbReference type="NCBIfam" id="NF007015">
    <property type="entry name" value="PRK09480.1"/>
    <property type="match status" value="1"/>
</dbReference>
<dbReference type="PANTHER" id="PTHR30055">
    <property type="entry name" value="HTH-TYPE TRANSCRIPTIONAL REGULATOR RUTR"/>
    <property type="match status" value="1"/>
</dbReference>
<dbReference type="PANTHER" id="PTHR30055:SF183">
    <property type="entry name" value="NUCLEOID OCCLUSION FACTOR SLMA"/>
    <property type="match status" value="1"/>
</dbReference>
<dbReference type="Pfam" id="PF22276">
    <property type="entry name" value="SlmA-like_C"/>
    <property type="match status" value="1"/>
</dbReference>
<dbReference type="Pfam" id="PF00440">
    <property type="entry name" value="TetR_N"/>
    <property type="match status" value="1"/>
</dbReference>
<dbReference type="SUPFAM" id="SSF46689">
    <property type="entry name" value="Homeodomain-like"/>
    <property type="match status" value="1"/>
</dbReference>
<dbReference type="SUPFAM" id="SSF48498">
    <property type="entry name" value="Tetracyclin repressor-like, C-terminal domain"/>
    <property type="match status" value="1"/>
</dbReference>
<dbReference type="PROSITE" id="PS01081">
    <property type="entry name" value="HTH_TETR_1"/>
    <property type="match status" value="1"/>
</dbReference>
<dbReference type="PROSITE" id="PS50977">
    <property type="entry name" value="HTH_TETR_2"/>
    <property type="match status" value="1"/>
</dbReference>
<name>SLMA_SALTI</name>
<comment type="function">
    <text evidence="1">Required for nucleoid occlusion (NO) phenomenon, which prevents Z-ring formation and cell division over the nucleoid. Acts as a DNA-associated cell division inhibitor that binds simultaneously chromosomal DNA and FtsZ, and disrupts the assembly of FtsZ polymers. SlmA-DNA-binding sequences (SBS) are dispersed on non-Ter regions of the chromosome, preventing FtsZ polymerization at these regions.</text>
</comment>
<comment type="subunit">
    <text evidence="1">Homodimer. Interacts with FtsZ.</text>
</comment>
<comment type="subcellular location">
    <subcellularLocation>
        <location evidence="1">Cytoplasm</location>
        <location evidence="1">Nucleoid</location>
    </subcellularLocation>
</comment>
<comment type="similarity">
    <text evidence="1">Belongs to the nucleoid occlusion factor SlmA family.</text>
</comment>
<feature type="chain" id="PRO_0000198979" description="Nucleoid occlusion factor SlmA">
    <location>
        <begin position="1"/>
        <end position="198"/>
    </location>
</feature>
<feature type="domain" description="HTH tetR-type" evidence="1">
    <location>
        <begin position="10"/>
        <end position="70"/>
    </location>
</feature>
<feature type="DNA-binding region" description="H-T-H motif" evidence="1">
    <location>
        <begin position="33"/>
        <end position="52"/>
    </location>
</feature>
<feature type="coiled-coil region" evidence="1">
    <location>
        <begin position="117"/>
        <end position="144"/>
    </location>
</feature>
<accession>Q8Z2H4</accession>
<accession>Q7C686</accession>
<proteinExistence type="inferred from homology"/>
<organism>
    <name type="scientific">Salmonella typhi</name>
    <dbReference type="NCBI Taxonomy" id="90370"/>
    <lineage>
        <taxon>Bacteria</taxon>
        <taxon>Pseudomonadati</taxon>
        <taxon>Pseudomonadota</taxon>
        <taxon>Gammaproteobacteria</taxon>
        <taxon>Enterobacterales</taxon>
        <taxon>Enterobacteriaceae</taxon>
        <taxon>Salmonella</taxon>
    </lineage>
</organism>
<sequence length="198" mass="22864">MAEKQTAKRNRREEILQSLALMLESSDGSQRITTAKLAASVGVSEAALYRHFPSKTRMFDSLIEFIEDSLITRINLILKDEKDTSTRLRLIVLLILGFGERNPGLTRILTGHALMFEQDRLQGRINQLFERIEAQLRQVLREKRMREGEGYTTDKNLLASQLLAFCEGMLSRFVRSEFKYRPTDDFDARWPLIAAQLQ</sequence>
<keyword id="KW-0131">Cell cycle</keyword>
<keyword id="KW-0132">Cell division</keyword>
<keyword id="KW-0175">Coiled coil</keyword>
<keyword id="KW-0963">Cytoplasm</keyword>
<keyword id="KW-0238">DNA-binding</keyword>
<evidence type="ECO:0000255" key="1">
    <source>
        <dbReference type="HAMAP-Rule" id="MF_01839"/>
    </source>
</evidence>
<protein>
    <recommendedName>
        <fullName evidence="1">Nucleoid occlusion factor SlmA</fullName>
    </recommendedName>
</protein>
<reference key="1">
    <citation type="journal article" date="2001" name="Nature">
        <title>Complete genome sequence of a multiple drug resistant Salmonella enterica serovar Typhi CT18.</title>
        <authorList>
            <person name="Parkhill J."/>
            <person name="Dougan G."/>
            <person name="James K.D."/>
            <person name="Thomson N.R."/>
            <person name="Pickard D."/>
            <person name="Wain J."/>
            <person name="Churcher C.M."/>
            <person name="Mungall K.L."/>
            <person name="Bentley S.D."/>
            <person name="Holden M.T.G."/>
            <person name="Sebaihia M."/>
            <person name="Baker S."/>
            <person name="Basham D."/>
            <person name="Brooks K."/>
            <person name="Chillingworth T."/>
            <person name="Connerton P."/>
            <person name="Cronin A."/>
            <person name="Davis P."/>
            <person name="Davies R.M."/>
            <person name="Dowd L."/>
            <person name="White N."/>
            <person name="Farrar J."/>
            <person name="Feltwell T."/>
            <person name="Hamlin N."/>
            <person name="Haque A."/>
            <person name="Hien T.T."/>
            <person name="Holroyd S."/>
            <person name="Jagels K."/>
            <person name="Krogh A."/>
            <person name="Larsen T.S."/>
            <person name="Leather S."/>
            <person name="Moule S."/>
            <person name="O'Gaora P."/>
            <person name="Parry C."/>
            <person name="Quail M.A."/>
            <person name="Rutherford K.M."/>
            <person name="Simmonds M."/>
            <person name="Skelton J."/>
            <person name="Stevens K."/>
            <person name="Whitehead S."/>
            <person name="Barrell B.G."/>
        </authorList>
    </citation>
    <scope>NUCLEOTIDE SEQUENCE [LARGE SCALE GENOMIC DNA]</scope>
    <source>
        <strain>CT18</strain>
    </source>
</reference>
<reference key="2">
    <citation type="journal article" date="2003" name="J. Bacteriol.">
        <title>Comparative genomics of Salmonella enterica serovar Typhi strains Ty2 and CT18.</title>
        <authorList>
            <person name="Deng W."/>
            <person name="Liou S.-R."/>
            <person name="Plunkett G. III"/>
            <person name="Mayhew G.F."/>
            <person name="Rose D.J."/>
            <person name="Burland V."/>
            <person name="Kodoyianni V."/>
            <person name="Schwartz D.C."/>
            <person name="Blattner F.R."/>
        </authorList>
    </citation>
    <scope>NUCLEOTIDE SEQUENCE [LARGE SCALE GENOMIC DNA]</scope>
    <source>
        <strain>ATCC 700931 / Ty2</strain>
    </source>
</reference>
<gene>
    <name evidence="1" type="primary">slmA</name>
    <name type="ordered locus">STY4062</name>
    <name type="ordered locus">t3786</name>
</gene>